<gene>
    <name evidence="1" type="primary">htpG</name>
    <name type="ordered locus">Mmc1_1694</name>
</gene>
<organism>
    <name type="scientific">Magnetococcus marinus (strain ATCC BAA-1437 / JCM 17883 / MC-1)</name>
    <dbReference type="NCBI Taxonomy" id="156889"/>
    <lineage>
        <taxon>Bacteria</taxon>
        <taxon>Pseudomonadati</taxon>
        <taxon>Pseudomonadota</taxon>
        <taxon>Alphaproteobacteria</taxon>
        <taxon>Magnetococcales</taxon>
        <taxon>Magnetococcaceae</taxon>
        <taxon>Magnetococcus</taxon>
    </lineage>
</organism>
<protein>
    <recommendedName>
        <fullName evidence="1">Chaperone protein HtpG</fullName>
    </recommendedName>
    <alternativeName>
        <fullName evidence="1">Heat shock protein HtpG</fullName>
    </alternativeName>
    <alternativeName>
        <fullName evidence="1">High temperature protein G</fullName>
    </alternativeName>
</protein>
<accession>A0L8B0</accession>
<comment type="function">
    <text evidence="1">Molecular chaperone. Has ATPase activity.</text>
</comment>
<comment type="subunit">
    <text evidence="1">Homodimer.</text>
</comment>
<comment type="subcellular location">
    <subcellularLocation>
        <location evidence="1">Cytoplasm</location>
    </subcellularLocation>
</comment>
<comment type="similarity">
    <text evidence="1">Belongs to the heat shock protein 90 family.</text>
</comment>
<name>HTPG_MAGMM</name>
<sequence length="642" mass="72968">MSAATETEVREFQTEVSQLLDLMIHALYSNKEIFLRELISNASDANDKLRFAGLSDDSLFEGDSELTIKLEFDKEAGTFSIMDNGIGMSRDEVISNIGTIAKSGTKEFFKSLTGDQQRDAHLIGQFGVGFYSSFIVADKVTLETRKAGAGAEQGVRWISAGDGSYTLENMEKAERGTRITLHMREDEKEFLDAWRLRSIVRKFSDHVTWPVKMLEELPPAPPAKEGEEPEPPKTPEWETVNKASALWTLSKNDITEDEYKEFYKHVGHDFEDPMEWVHARMEGRMEYTLLLYIPGRAPFDLWDRDRRGGLKLFVRRVFIMDTSEELLPRYLRFVRGVIDSADLPLNVSREILQQNRQVEAIKKGLVHKVLGMLEEMLKNDPEKYATFWKEFGMVLKEGMIEDFANKERIAKLCRFSTTHDGERVPKIALADYVERMKEGQEAIYYVTGESFEACSSSPHLEIFRKKGIEVLLLSDRVDEWTVTHLTEFDGKPLQAITKGELDLSKFAGGEEEAKDEEAEKAQEEALKPITERMAKVLEGQVKEVRLSHRLTESPACLVGDAHDMSATLERLLKEAGQEVPTAKRILEINPSHALLKRLADEADEEKFGELTHVLHDQALLAEGGQLKDPSQFVKRLNKLLMG</sequence>
<reference key="1">
    <citation type="journal article" date="2009" name="Appl. Environ. Microbiol.">
        <title>Complete genome sequence of the chemolithoautotrophic marine magnetotactic coccus strain MC-1.</title>
        <authorList>
            <person name="Schubbe S."/>
            <person name="Williams T.J."/>
            <person name="Xie G."/>
            <person name="Kiss H.E."/>
            <person name="Brettin T.S."/>
            <person name="Martinez D."/>
            <person name="Ross C.A."/>
            <person name="Schuler D."/>
            <person name="Cox B.L."/>
            <person name="Nealson K.H."/>
            <person name="Bazylinski D.A."/>
        </authorList>
    </citation>
    <scope>NUCLEOTIDE SEQUENCE [LARGE SCALE GENOMIC DNA]</scope>
    <source>
        <strain>ATCC BAA-1437 / JCM 17883 / MC-1</strain>
    </source>
</reference>
<evidence type="ECO:0000255" key="1">
    <source>
        <dbReference type="HAMAP-Rule" id="MF_00505"/>
    </source>
</evidence>
<evidence type="ECO:0000256" key="2">
    <source>
        <dbReference type="SAM" id="MobiDB-lite"/>
    </source>
</evidence>
<dbReference type="EMBL" id="CP000471">
    <property type="protein sequence ID" value="ABK44203.1"/>
    <property type="molecule type" value="Genomic_DNA"/>
</dbReference>
<dbReference type="RefSeq" id="WP_011713351.1">
    <property type="nucleotide sequence ID" value="NC_008576.1"/>
</dbReference>
<dbReference type="SMR" id="A0L8B0"/>
<dbReference type="STRING" id="156889.Mmc1_1694"/>
<dbReference type="KEGG" id="mgm:Mmc1_1694"/>
<dbReference type="eggNOG" id="COG0326">
    <property type="taxonomic scope" value="Bacteria"/>
</dbReference>
<dbReference type="HOGENOM" id="CLU_006684_3_0_5"/>
<dbReference type="OrthoDB" id="9802640at2"/>
<dbReference type="Proteomes" id="UP000002586">
    <property type="component" value="Chromosome"/>
</dbReference>
<dbReference type="GO" id="GO:0005737">
    <property type="term" value="C:cytoplasm"/>
    <property type="evidence" value="ECO:0007669"/>
    <property type="project" value="UniProtKB-SubCell"/>
</dbReference>
<dbReference type="GO" id="GO:0005524">
    <property type="term" value="F:ATP binding"/>
    <property type="evidence" value="ECO:0007669"/>
    <property type="project" value="UniProtKB-UniRule"/>
</dbReference>
<dbReference type="GO" id="GO:0016887">
    <property type="term" value="F:ATP hydrolysis activity"/>
    <property type="evidence" value="ECO:0007669"/>
    <property type="project" value="InterPro"/>
</dbReference>
<dbReference type="GO" id="GO:0140662">
    <property type="term" value="F:ATP-dependent protein folding chaperone"/>
    <property type="evidence" value="ECO:0007669"/>
    <property type="project" value="InterPro"/>
</dbReference>
<dbReference type="GO" id="GO:0051082">
    <property type="term" value="F:unfolded protein binding"/>
    <property type="evidence" value="ECO:0007669"/>
    <property type="project" value="UniProtKB-UniRule"/>
</dbReference>
<dbReference type="CDD" id="cd16927">
    <property type="entry name" value="HATPase_Hsp90-like"/>
    <property type="match status" value="1"/>
</dbReference>
<dbReference type="FunFam" id="3.30.230.80:FF:000002">
    <property type="entry name" value="Molecular chaperone HtpG"/>
    <property type="match status" value="1"/>
</dbReference>
<dbReference type="FunFam" id="3.30.565.10:FF:000009">
    <property type="entry name" value="Molecular chaperone HtpG"/>
    <property type="match status" value="1"/>
</dbReference>
<dbReference type="Gene3D" id="3.30.230.80">
    <property type="match status" value="1"/>
</dbReference>
<dbReference type="Gene3D" id="3.40.50.11260">
    <property type="match status" value="1"/>
</dbReference>
<dbReference type="Gene3D" id="1.20.120.790">
    <property type="entry name" value="Heat shock protein 90, C-terminal domain"/>
    <property type="match status" value="1"/>
</dbReference>
<dbReference type="Gene3D" id="3.30.565.10">
    <property type="entry name" value="Histidine kinase-like ATPase, C-terminal domain"/>
    <property type="match status" value="1"/>
</dbReference>
<dbReference type="HAMAP" id="MF_00505">
    <property type="entry name" value="HSP90"/>
    <property type="match status" value="1"/>
</dbReference>
<dbReference type="InterPro" id="IPR036890">
    <property type="entry name" value="HATPase_C_sf"/>
</dbReference>
<dbReference type="InterPro" id="IPR019805">
    <property type="entry name" value="Heat_shock_protein_90_CS"/>
</dbReference>
<dbReference type="InterPro" id="IPR037196">
    <property type="entry name" value="HSP90_C"/>
</dbReference>
<dbReference type="InterPro" id="IPR001404">
    <property type="entry name" value="Hsp90_fam"/>
</dbReference>
<dbReference type="InterPro" id="IPR020575">
    <property type="entry name" value="Hsp90_N"/>
</dbReference>
<dbReference type="InterPro" id="IPR020568">
    <property type="entry name" value="Ribosomal_Su5_D2-typ_SF"/>
</dbReference>
<dbReference type="NCBIfam" id="NF003555">
    <property type="entry name" value="PRK05218.1"/>
    <property type="match status" value="1"/>
</dbReference>
<dbReference type="PANTHER" id="PTHR11528">
    <property type="entry name" value="HEAT SHOCK PROTEIN 90 FAMILY MEMBER"/>
    <property type="match status" value="1"/>
</dbReference>
<dbReference type="Pfam" id="PF13589">
    <property type="entry name" value="HATPase_c_3"/>
    <property type="match status" value="1"/>
</dbReference>
<dbReference type="Pfam" id="PF00183">
    <property type="entry name" value="HSP90"/>
    <property type="match status" value="1"/>
</dbReference>
<dbReference type="PIRSF" id="PIRSF002583">
    <property type="entry name" value="Hsp90"/>
    <property type="match status" value="1"/>
</dbReference>
<dbReference type="PRINTS" id="PR00775">
    <property type="entry name" value="HEATSHOCK90"/>
</dbReference>
<dbReference type="SMART" id="SM00387">
    <property type="entry name" value="HATPase_c"/>
    <property type="match status" value="1"/>
</dbReference>
<dbReference type="SUPFAM" id="SSF55874">
    <property type="entry name" value="ATPase domain of HSP90 chaperone/DNA topoisomerase II/histidine kinase"/>
    <property type="match status" value="1"/>
</dbReference>
<dbReference type="SUPFAM" id="SSF110942">
    <property type="entry name" value="HSP90 C-terminal domain"/>
    <property type="match status" value="1"/>
</dbReference>
<dbReference type="SUPFAM" id="SSF54211">
    <property type="entry name" value="Ribosomal protein S5 domain 2-like"/>
    <property type="match status" value="1"/>
</dbReference>
<dbReference type="PROSITE" id="PS00298">
    <property type="entry name" value="HSP90"/>
    <property type="match status" value="1"/>
</dbReference>
<keyword id="KW-0067">ATP-binding</keyword>
<keyword id="KW-0143">Chaperone</keyword>
<keyword id="KW-0963">Cytoplasm</keyword>
<keyword id="KW-0547">Nucleotide-binding</keyword>
<keyword id="KW-1185">Reference proteome</keyword>
<keyword id="KW-0346">Stress response</keyword>
<feature type="chain" id="PRO_1000014927" description="Chaperone protein HtpG">
    <location>
        <begin position="1"/>
        <end position="642"/>
    </location>
</feature>
<feature type="region of interest" description="A; substrate-binding" evidence="1">
    <location>
        <begin position="1"/>
        <end position="349"/>
    </location>
</feature>
<feature type="region of interest" description="Disordered" evidence="2">
    <location>
        <begin position="216"/>
        <end position="238"/>
    </location>
</feature>
<feature type="region of interest" description="B" evidence="1">
    <location>
        <begin position="350"/>
        <end position="570"/>
    </location>
</feature>
<feature type="region of interest" description="C" evidence="1">
    <location>
        <begin position="571"/>
        <end position="642"/>
    </location>
</feature>
<feature type="compositionally biased region" description="Basic and acidic residues" evidence="2">
    <location>
        <begin position="224"/>
        <end position="236"/>
    </location>
</feature>
<proteinExistence type="inferred from homology"/>